<organism>
    <name type="scientific">Arabidopsis thaliana</name>
    <name type="common">Mouse-ear cress</name>
    <dbReference type="NCBI Taxonomy" id="3702"/>
    <lineage>
        <taxon>Eukaryota</taxon>
        <taxon>Viridiplantae</taxon>
        <taxon>Streptophyta</taxon>
        <taxon>Embryophyta</taxon>
        <taxon>Tracheophyta</taxon>
        <taxon>Spermatophyta</taxon>
        <taxon>Magnoliopsida</taxon>
        <taxon>eudicotyledons</taxon>
        <taxon>Gunneridae</taxon>
        <taxon>Pentapetalae</taxon>
        <taxon>rosids</taxon>
        <taxon>malvids</taxon>
        <taxon>Brassicales</taxon>
        <taxon>Brassicaceae</taxon>
        <taxon>Camelineae</taxon>
        <taxon>Arabidopsis</taxon>
    </lineage>
</organism>
<protein>
    <recommendedName>
        <fullName evidence="9">Putative beta-glucosidase 5</fullName>
        <shortName evidence="9">AtBGLU5</shortName>
        <ecNumber evidence="1">3.2.1.21</ecNumber>
    </recommendedName>
</protein>
<proteinExistence type="uncertain"/>
<comment type="catalytic activity">
    <reaction evidence="1">
        <text>Hydrolysis of terminal, non-reducing beta-D-glucosyl residues with release of beta-D-glucose.</text>
        <dbReference type="EC" id="3.2.1.21"/>
    </reaction>
</comment>
<comment type="alternative products">
    <event type="alternative splicing"/>
    <isoform>
        <id>Q8RXN9-1</id>
        <name>1</name>
        <sequence type="displayed"/>
    </isoform>
    <isoform>
        <id>Q8RXN9-2</id>
        <name>2</name>
        <sequence type="described" ref="VSP_040524"/>
    </isoform>
</comment>
<comment type="miscellaneous">
    <molecule>Isoform 2</molecule>
    <text evidence="10">May be due to introns retention.</text>
</comment>
<comment type="similarity">
    <text evidence="10">Belongs to the glycosyl hydrolase 1 family.</text>
</comment>
<comment type="caution">
    <text evidence="10">Could be the product of a pseudogene.</text>
</comment>
<comment type="sequence caution" evidence="10">
    <conflict type="erroneous gene model prediction">
        <sequence resource="EMBL-CDS" id="AAC24061"/>
    </conflict>
</comment>
<comment type="sequence caution" evidence="10">
    <conflict type="erroneous termination">
        <sequence resource="EMBL-CDS" id="AAC24061"/>
    </conflict>
    <text>Truncated C-terminus.</text>
</comment>
<name>BGL05_ARATH</name>
<keyword id="KW-0025">Alternative splicing</keyword>
<keyword id="KW-1015">Disulfide bond</keyword>
<keyword id="KW-0325">Glycoprotein</keyword>
<keyword id="KW-0326">Glycosidase</keyword>
<keyword id="KW-0378">Hydrolase</keyword>
<keyword id="KW-1185">Reference proteome</keyword>
<keyword id="KW-0732">Signal</keyword>
<gene>
    <name evidence="9" type="primary">BGLU5</name>
    <name evidence="11" type="ordered locus">At1g60260</name>
    <name evidence="12" type="ORF">T13D8.15</name>
</gene>
<reference key="1">
    <citation type="journal article" date="2000" name="Nature">
        <title>Sequence and analysis of chromosome 1 of the plant Arabidopsis thaliana.</title>
        <authorList>
            <person name="Theologis A."/>
            <person name="Ecker J.R."/>
            <person name="Palm C.J."/>
            <person name="Federspiel N.A."/>
            <person name="Kaul S."/>
            <person name="White O."/>
            <person name="Alonso J."/>
            <person name="Altafi H."/>
            <person name="Araujo R."/>
            <person name="Bowman C.L."/>
            <person name="Brooks S.Y."/>
            <person name="Buehler E."/>
            <person name="Chan A."/>
            <person name="Chao Q."/>
            <person name="Chen H."/>
            <person name="Cheuk R.F."/>
            <person name="Chin C.W."/>
            <person name="Chung M.K."/>
            <person name="Conn L."/>
            <person name="Conway A.B."/>
            <person name="Conway A.R."/>
            <person name="Creasy T.H."/>
            <person name="Dewar K."/>
            <person name="Dunn P."/>
            <person name="Etgu P."/>
            <person name="Feldblyum T.V."/>
            <person name="Feng J.-D."/>
            <person name="Fong B."/>
            <person name="Fujii C.Y."/>
            <person name="Gill J.E."/>
            <person name="Goldsmith A.D."/>
            <person name="Haas B."/>
            <person name="Hansen N.F."/>
            <person name="Hughes B."/>
            <person name="Huizar L."/>
            <person name="Hunter J.L."/>
            <person name="Jenkins J."/>
            <person name="Johnson-Hopson C."/>
            <person name="Khan S."/>
            <person name="Khaykin E."/>
            <person name="Kim C.J."/>
            <person name="Koo H.L."/>
            <person name="Kremenetskaia I."/>
            <person name="Kurtz D.B."/>
            <person name="Kwan A."/>
            <person name="Lam B."/>
            <person name="Langin-Hooper S."/>
            <person name="Lee A."/>
            <person name="Lee J.M."/>
            <person name="Lenz C.A."/>
            <person name="Li J.H."/>
            <person name="Li Y.-P."/>
            <person name="Lin X."/>
            <person name="Liu S.X."/>
            <person name="Liu Z.A."/>
            <person name="Luros J.S."/>
            <person name="Maiti R."/>
            <person name="Marziali A."/>
            <person name="Militscher J."/>
            <person name="Miranda M."/>
            <person name="Nguyen M."/>
            <person name="Nierman W.C."/>
            <person name="Osborne B.I."/>
            <person name="Pai G."/>
            <person name="Peterson J."/>
            <person name="Pham P.K."/>
            <person name="Rizzo M."/>
            <person name="Rooney T."/>
            <person name="Rowley D."/>
            <person name="Sakano H."/>
            <person name="Salzberg S.L."/>
            <person name="Schwartz J.R."/>
            <person name="Shinn P."/>
            <person name="Southwick A.M."/>
            <person name="Sun H."/>
            <person name="Tallon L.J."/>
            <person name="Tambunga G."/>
            <person name="Toriumi M.J."/>
            <person name="Town C.D."/>
            <person name="Utterback T."/>
            <person name="Van Aken S."/>
            <person name="Vaysberg M."/>
            <person name="Vysotskaia V.S."/>
            <person name="Walker M."/>
            <person name="Wu D."/>
            <person name="Yu G."/>
            <person name="Fraser C.M."/>
            <person name="Venter J.C."/>
            <person name="Davis R.W."/>
        </authorList>
    </citation>
    <scope>NUCLEOTIDE SEQUENCE [LARGE SCALE GENOMIC DNA]</scope>
    <source>
        <strain>cv. Columbia</strain>
    </source>
</reference>
<reference key="2">
    <citation type="journal article" date="2017" name="Plant J.">
        <title>Araport11: a complete reannotation of the Arabidopsis thaliana reference genome.</title>
        <authorList>
            <person name="Cheng C.Y."/>
            <person name="Krishnakumar V."/>
            <person name="Chan A.P."/>
            <person name="Thibaud-Nissen F."/>
            <person name="Schobel S."/>
            <person name="Town C.D."/>
        </authorList>
    </citation>
    <scope>GENOME REANNOTATION</scope>
    <source>
        <strain>cv. Columbia</strain>
    </source>
</reference>
<reference key="3">
    <citation type="journal article" date="2003" name="Science">
        <title>Empirical analysis of transcriptional activity in the Arabidopsis genome.</title>
        <authorList>
            <person name="Yamada K."/>
            <person name="Lim J."/>
            <person name="Dale J.M."/>
            <person name="Chen H."/>
            <person name="Shinn P."/>
            <person name="Palm C.J."/>
            <person name="Southwick A.M."/>
            <person name="Wu H.C."/>
            <person name="Kim C.J."/>
            <person name="Nguyen M."/>
            <person name="Pham P.K."/>
            <person name="Cheuk R.F."/>
            <person name="Karlin-Newmann G."/>
            <person name="Liu S.X."/>
            <person name="Lam B."/>
            <person name="Sakano H."/>
            <person name="Wu T."/>
            <person name="Yu G."/>
            <person name="Miranda M."/>
            <person name="Quach H.L."/>
            <person name="Tripp M."/>
            <person name="Chang C.H."/>
            <person name="Lee J.M."/>
            <person name="Toriumi M.J."/>
            <person name="Chan M.M."/>
            <person name="Tang C.C."/>
            <person name="Onodera C.S."/>
            <person name="Deng J.M."/>
            <person name="Akiyama K."/>
            <person name="Ansari Y."/>
            <person name="Arakawa T."/>
            <person name="Banh J."/>
            <person name="Banno F."/>
            <person name="Bowser L."/>
            <person name="Brooks S.Y."/>
            <person name="Carninci P."/>
            <person name="Chao Q."/>
            <person name="Choy N."/>
            <person name="Enju A."/>
            <person name="Goldsmith A.D."/>
            <person name="Gurjal M."/>
            <person name="Hansen N.F."/>
            <person name="Hayashizaki Y."/>
            <person name="Johnson-Hopson C."/>
            <person name="Hsuan V.W."/>
            <person name="Iida K."/>
            <person name="Karnes M."/>
            <person name="Khan S."/>
            <person name="Koesema E."/>
            <person name="Ishida J."/>
            <person name="Jiang P.X."/>
            <person name="Jones T."/>
            <person name="Kawai J."/>
            <person name="Kamiya A."/>
            <person name="Meyers C."/>
            <person name="Nakajima M."/>
            <person name="Narusaka M."/>
            <person name="Seki M."/>
            <person name="Sakurai T."/>
            <person name="Satou M."/>
            <person name="Tamse R."/>
            <person name="Vaysberg M."/>
            <person name="Wallender E.K."/>
            <person name="Wong C."/>
            <person name="Yamamura Y."/>
            <person name="Yuan S."/>
            <person name="Shinozaki K."/>
            <person name="Davis R.W."/>
            <person name="Theologis A."/>
            <person name="Ecker J.R."/>
        </authorList>
    </citation>
    <scope>NUCLEOTIDE SEQUENCE [LARGE SCALE MRNA] (ISOFORM 2)</scope>
    <source>
        <strain>cv. Columbia</strain>
    </source>
</reference>
<reference key="4">
    <citation type="journal article" date="2004" name="Plant Mol. Biol.">
        <title>Functional genomic analysis of Arabidopsis thaliana glycoside hydrolase family 1.</title>
        <authorList>
            <person name="Xu Z."/>
            <person name="Escamilla-Trevino L.L."/>
            <person name="Zeng L."/>
            <person name="Lalgondar M."/>
            <person name="Bevan D.R."/>
            <person name="Winkel B.S.J."/>
            <person name="Mohamed A."/>
            <person name="Cheng C.-L."/>
            <person name="Shih M.-C."/>
            <person name="Poulton J.E."/>
            <person name="Esen A."/>
        </authorList>
    </citation>
    <scope>GENE FAMILY</scope>
    <scope>NOMENCLATURE</scope>
</reference>
<feature type="signal peptide" evidence="6">
    <location>
        <begin position="1"/>
        <end position="20"/>
    </location>
</feature>
<feature type="chain" id="PRO_0000389567" description="Putative beta-glucosidase 5">
    <location>
        <begin position="21"/>
        <end position="500"/>
    </location>
</feature>
<feature type="active site" description="Proton donor" evidence="3">
    <location>
        <position position="186"/>
    </location>
</feature>
<feature type="active site" description="Nucleophile" evidence="3">
    <location>
        <position position="394"/>
    </location>
</feature>
<feature type="binding site" evidence="4">
    <location>
        <position position="43"/>
    </location>
    <ligand>
        <name>a beta-D-glucoside</name>
        <dbReference type="ChEBI" id="CHEBI:22798"/>
    </ligand>
</feature>
<feature type="binding site" evidence="4">
    <location>
        <position position="140"/>
    </location>
    <ligand>
        <name>a beta-D-glucoside</name>
        <dbReference type="ChEBI" id="CHEBI:22798"/>
    </ligand>
</feature>
<feature type="binding site" evidence="4">
    <location>
        <begin position="185"/>
        <end position="186"/>
    </location>
    <ligand>
        <name>a beta-D-glucoside</name>
        <dbReference type="ChEBI" id="CHEBI:22798"/>
    </ligand>
</feature>
<feature type="binding site" evidence="4">
    <location>
        <position position="328"/>
    </location>
    <ligand>
        <name>a beta-D-glucoside</name>
        <dbReference type="ChEBI" id="CHEBI:22798"/>
    </ligand>
</feature>
<feature type="binding site" evidence="5">
    <location>
        <position position="394"/>
    </location>
    <ligand>
        <name>a beta-D-glucoside</name>
        <dbReference type="ChEBI" id="CHEBI:22798"/>
    </ligand>
</feature>
<feature type="binding site" evidence="4">
    <location>
        <position position="434"/>
    </location>
    <ligand>
        <name>a beta-D-glucoside</name>
        <dbReference type="ChEBI" id="CHEBI:22798"/>
    </ligand>
</feature>
<feature type="binding site" evidence="2">
    <location>
        <position position="450"/>
    </location>
    <ligand>
        <name>a beta-D-glucoside</name>
        <dbReference type="ChEBI" id="CHEBI:22798"/>
    </ligand>
</feature>
<feature type="glycosylation site" description="N-linked (GlcNAc...) asparagine" evidence="7">
    <location>
        <position position="216"/>
    </location>
</feature>
<feature type="glycosylation site" description="N-linked (GlcNAc...) asparagine" evidence="7">
    <location>
        <position position="361"/>
    </location>
</feature>
<feature type="glycosylation site" description="N-linked (GlcNAc...) asparagine" evidence="7">
    <location>
        <position position="424"/>
    </location>
</feature>
<feature type="glycosylation site" description="N-linked (GlcNAc...) asparagine" evidence="7">
    <location>
        <position position="456"/>
    </location>
</feature>
<feature type="glycosylation site" description="N-linked (GlcNAc...) asparagine" evidence="7">
    <location>
        <position position="495"/>
    </location>
</feature>
<feature type="disulfide bond" evidence="4">
    <location>
        <begin position="205"/>
        <end position="212"/>
    </location>
</feature>
<feature type="splice variant" id="VSP_040524" description="In isoform 2." evidence="8">
    <location>
        <begin position="284"/>
        <end position="500"/>
    </location>
</feature>
<feature type="sequence conflict" description="In Ref. 3; AAL87256." evidence="10" ref="3">
    <original>I</original>
    <variation>V</variation>
    <location>
        <position position="184"/>
    </location>
</feature>
<sequence length="500" mass="56645">MEQFFALFTIFLSFAFPGRCSDVFSRSDFPEGFLFGAGTSAYQWEGAAAEDGRKPSVWDTLCYSRNIGNGDVTCDGYHKYKEDVKLMVDTNLDAFRFSISWSRLIPNGRGSVNQKGLQFYKNLISELITHGIEPHVTLYHYDHPQYLEDEYGGWVNNMMIKDFTAYVDVCFREFGNYVKFWTTINEANVFTIGGYNDGDTPPGRCSLPGKNCLLGNSSTETYIVGHNLLLAHASASRLYKQKYKDKQGGSIGFGLYLMGLTPSTSSKDDAIATQRAKDFYFGWFLGPLIFGDYPDTMKRTIGSRLPVFSEEESEQVKGSSDFIGINHYFAASVTNIKFKPSISGNPDFYSDMGAYVTYLGNFSVIEYPVAPWTMEAVLEYIKQSYDNPPVYILENGTPMTQHKDTHRVEYMNAYIGGVLKSIRNGSDTRGYFVWSFMDLFELIGRYDYGYGLYSVNFSDPHRKRSPRLSAHWYSDFLKGKTSFLDSKGIKELQSNFSSSS</sequence>
<dbReference type="EC" id="3.2.1.21" evidence="1"/>
<dbReference type="EMBL" id="AC004473">
    <property type="protein sequence ID" value="AAC24061.1"/>
    <property type="status" value="ALT_SEQ"/>
    <property type="molecule type" value="Genomic_DNA"/>
</dbReference>
<dbReference type="EMBL" id="CP002684">
    <property type="protein sequence ID" value="AEE33671.2"/>
    <property type="molecule type" value="Genomic_DNA"/>
</dbReference>
<dbReference type="EMBL" id="AY080772">
    <property type="protein sequence ID" value="AAL87256.1"/>
    <property type="molecule type" value="mRNA"/>
</dbReference>
<dbReference type="PIR" id="T02278">
    <property type="entry name" value="T02278"/>
</dbReference>
<dbReference type="RefSeq" id="NP_001319275.1">
    <property type="nucleotide sequence ID" value="NM_001333890.1"/>
</dbReference>
<dbReference type="SMR" id="Q8RXN9"/>
<dbReference type="FunCoup" id="Q8RXN9">
    <property type="interactions" value="193"/>
</dbReference>
<dbReference type="STRING" id="3702.Q8RXN9"/>
<dbReference type="CAZy" id="GH1">
    <property type="family name" value="Glycoside Hydrolase Family 1"/>
</dbReference>
<dbReference type="GlyCosmos" id="Q8RXN9">
    <property type="glycosylation" value="5 sites, No reported glycans"/>
</dbReference>
<dbReference type="GlyGen" id="Q8RXN9">
    <property type="glycosylation" value="5 sites"/>
</dbReference>
<dbReference type="PaxDb" id="3702-AT1G60260.1"/>
<dbReference type="PeptideAtlas" id="Q8RXN9"/>
<dbReference type="GeneID" id="3767578"/>
<dbReference type="KEGG" id="ath:AT1G60260"/>
<dbReference type="Araport" id="AT1G60260"/>
<dbReference type="TAIR" id="AT1G60260"/>
<dbReference type="eggNOG" id="KOG0626">
    <property type="taxonomic scope" value="Eukaryota"/>
</dbReference>
<dbReference type="HOGENOM" id="CLU_001859_1_0_1"/>
<dbReference type="InParanoid" id="Q8RXN9"/>
<dbReference type="BioCyc" id="ARA:AT1G60260-MONOMER"/>
<dbReference type="Proteomes" id="UP000006548">
    <property type="component" value="Chromosome 1"/>
</dbReference>
<dbReference type="ExpressionAtlas" id="Q8RXN9">
    <property type="expression patterns" value="baseline and differential"/>
</dbReference>
<dbReference type="GO" id="GO:0008422">
    <property type="term" value="F:beta-glucosidase activity"/>
    <property type="evidence" value="ECO:0000318"/>
    <property type="project" value="GO_Central"/>
</dbReference>
<dbReference type="GO" id="GO:0005975">
    <property type="term" value="P:carbohydrate metabolic process"/>
    <property type="evidence" value="ECO:0007669"/>
    <property type="project" value="InterPro"/>
</dbReference>
<dbReference type="FunFam" id="3.20.20.80:FF:000069">
    <property type="entry name" value="Beta-glucosidase 1"/>
    <property type="match status" value="1"/>
</dbReference>
<dbReference type="Gene3D" id="3.20.20.80">
    <property type="entry name" value="Glycosidases"/>
    <property type="match status" value="1"/>
</dbReference>
<dbReference type="InterPro" id="IPR001360">
    <property type="entry name" value="Glyco_hydro_1"/>
</dbReference>
<dbReference type="InterPro" id="IPR033132">
    <property type="entry name" value="Glyco_hydro_1_N_CS"/>
</dbReference>
<dbReference type="InterPro" id="IPR017853">
    <property type="entry name" value="Glycoside_hydrolase_SF"/>
</dbReference>
<dbReference type="PANTHER" id="PTHR10353:SF150">
    <property type="entry name" value="BETA-GLUCOSIDASE 1-RELATED"/>
    <property type="match status" value="1"/>
</dbReference>
<dbReference type="PANTHER" id="PTHR10353">
    <property type="entry name" value="GLYCOSYL HYDROLASE"/>
    <property type="match status" value="1"/>
</dbReference>
<dbReference type="Pfam" id="PF00232">
    <property type="entry name" value="Glyco_hydro_1"/>
    <property type="match status" value="1"/>
</dbReference>
<dbReference type="PRINTS" id="PR00131">
    <property type="entry name" value="GLHYDRLASE1"/>
</dbReference>
<dbReference type="SUPFAM" id="SSF51445">
    <property type="entry name" value="(Trans)glycosidases"/>
    <property type="match status" value="1"/>
</dbReference>
<dbReference type="PROSITE" id="PS00653">
    <property type="entry name" value="GLYCOSYL_HYDROL_F1_2"/>
    <property type="match status" value="1"/>
</dbReference>
<accession>Q8RXN9</accession>
<accession>F4IER4</accession>
<accession>O80749</accession>
<evidence type="ECO:0000250" key="1">
    <source>
        <dbReference type="UniProtKB" id="O64879"/>
    </source>
</evidence>
<evidence type="ECO:0000250" key="2">
    <source>
        <dbReference type="UniProtKB" id="P49235"/>
    </source>
</evidence>
<evidence type="ECO:0000250" key="3">
    <source>
        <dbReference type="UniProtKB" id="Q75I93"/>
    </source>
</evidence>
<evidence type="ECO:0000250" key="4">
    <source>
        <dbReference type="UniProtKB" id="Q7XSK0"/>
    </source>
</evidence>
<evidence type="ECO:0000250" key="5">
    <source>
        <dbReference type="UniProtKB" id="Q9SPP9"/>
    </source>
</evidence>
<evidence type="ECO:0000255" key="6"/>
<evidence type="ECO:0000255" key="7">
    <source>
        <dbReference type="PROSITE-ProRule" id="PRU00498"/>
    </source>
</evidence>
<evidence type="ECO:0000303" key="8">
    <source>
    </source>
</evidence>
<evidence type="ECO:0000303" key="9">
    <source>
    </source>
</evidence>
<evidence type="ECO:0000305" key="10"/>
<evidence type="ECO:0000312" key="11">
    <source>
        <dbReference type="Araport" id="AT1G60260"/>
    </source>
</evidence>
<evidence type="ECO:0000312" key="12">
    <source>
        <dbReference type="EMBL" id="AAC24061.1"/>
    </source>
</evidence>